<feature type="chain" id="PRO_1000046552" description="Isocitrate dehydrogenase kinase/phosphatase">
    <location>
        <begin position="1"/>
        <end position="575"/>
    </location>
</feature>
<feature type="active site" evidence="1">
    <location>
        <position position="371"/>
    </location>
</feature>
<feature type="binding site" evidence="1">
    <location>
        <begin position="315"/>
        <end position="321"/>
    </location>
    <ligand>
        <name>ATP</name>
        <dbReference type="ChEBI" id="CHEBI:30616"/>
    </ligand>
</feature>
<feature type="binding site" evidence="1">
    <location>
        <position position="336"/>
    </location>
    <ligand>
        <name>ATP</name>
        <dbReference type="ChEBI" id="CHEBI:30616"/>
    </ligand>
</feature>
<accession>A8ANB7</accession>
<reference key="1">
    <citation type="submission" date="2007-08" db="EMBL/GenBank/DDBJ databases">
        <authorList>
            <consortium name="The Citrobacter koseri Genome Sequencing Project"/>
            <person name="McClelland M."/>
            <person name="Sanderson E.K."/>
            <person name="Porwollik S."/>
            <person name="Spieth J."/>
            <person name="Clifton W.S."/>
            <person name="Latreille P."/>
            <person name="Courtney L."/>
            <person name="Wang C."/>
            <person name="Pepin K."/>
            <person name="Bhonagiri V."/>
            <person name="Nash W."/>
            <person name="Johnson M."/>
            <person name="Thiruvilangam P."/>
            <person name="Wilson R."/>
        </authorList>
    </citation>
    <scope>NUCLEOTIDE SEQUENCE [LARGE SCALE GENOMIC DNA]</scope>
    <source>
        <strain>ATCC BAA-895 / CDC 4225-83 / SGSC4696</strain>
    </source>
</reference>
<sequence length="575" mass="67234">MSRGLELLIAQTILQGFDAQYGRFLEVTSGAQQRFEQADWHAVQQAMKSRIHLYDHHVGLVVEQLRCITDGKSTDAAFLLRVKEHYTRLLPDYPRFEIAESFFNSVYCRLFDHRSLTPERLFIFSSQPERRFRTIPRPLAKDFFPDHGWEPLLTRILSDLPLRLPWQNKSRDIHYIIAHLTETFGAEALHRSHLQVANELFYRNKAAWLVGKLLTPAGTLPFLLPIHRTDEGELFVDTCLTTTAEASIVFGFARSYFMVYAPLPAALVEWLREILPGKTTAELYMAIGCQKHAKTESYREYLLYLANSDEQFIEAPGIRGMVMLVFTLPGFDRVFKIIKDRFAPQKEMSAAHVRACYQLVKEHDRVGRMADTQEFENFVLEKRRIAPALMTLLRQEAPEKIIDLGDQIVIRHLYIERRMVPLNIWLEQVEGQQLRDAIEEYGNAIRQLAAANIFPGDMLFKNFGVTRHGRVVFYDYDEICYMTEVNFRDIPQARYPEDELASEPWYSVSPGDVFPEEFRHWLCADPRIGPLFEEMHADLFRADYWRALQTRIREGHVEDVYAYRRKQRFCFRFAA</sequence>
<evidence type="ECO:0000255" key="1">
    <source>
        <dbReference type="HAMAP-Rule" id="MF_00747"/>
    </source>
</evidence>
<name>ACEK_CITK8</name>
<organism>
    <name type="scientific">Citrobacter koseri (strain ATCC BAA-895 / CDC 4225-83 / SGSC4696)</name>
    <dbReference type="NCBI Taxonomy" id="290338"/>
    <lineage>
        <taxon>Bacteria</taxon>
        <taxon>Pseudomonadati</taxon>
        <taxon>Pseudomonadota</taxon>
        <taxon>Gammaproteobacteria</taxon>
        <taxon>Enterobacterales</taxon>
        <taxon>Enterobacteriaceae</taxon>
        <taxon>Citrobacter</taxon>
    </lineage>
</organism>
<dbReference type="EC" id="2.7.11.5" evidence="1"/>
<dbReference type="EC" id="3.1.3.-" evidence="1"/>
<dbReference type="EMBL" id="CP000822">
    <property type="protein sequence ID" value="ABV14980.1"/>
    <property type="molecule type" value="Genomic_DNA"/>
</dbReference>
<dbReference type="RefSeq" id="WP_012134674.1">
    <property type="nucleotide sequence ID" value="NC_009792.1"/>
</dbReference>
<dbReference type="SMR" id="A8ANB7"/>
<dbReference type="STRING" id="290338.CKO_03904"/>
<dbReference type="GeneID" id="45137568"/>
<dbReference type="KEGG" id="cko:CKO_03904"/>
<dbReference type="HOGENOM" id="CLU_033804_1_1_6"/>
<dbReference type="OrthoDB" id="5287793at2"/>
<dbReference type="Proteomes" id="UP000008148">
    <property type="component" value="Chromosome"/>
</dbReference>
<dbReference type="GO" id="GO:0005737">
    <property type="term" value="C:cytoplasm"/>
    <property type="evidence" value="ECO:0007669"/>
    <property type="project" value="UniProtKB-SubCell"/>
</dbReference>
<dbReference type="GO" id="GO:0008772">
    <property type="term" value="F:[isocitrate dehydrogenase (NADP+)] kinase activity"/>
    <property type="evidence" value="ECO:0007669"/>
    <property type="project" value="UniProtKB-UniRule"/>
</dbReference>
<dbReference type="GO" id="GO:0016208">
    <property type="term" value="F:AMP binding"/>
    <property type="evidence" value="ECO:0007669"/>
    <property type="project" value="TreeGrafter"/>
</dbReference>
<dbReference type="GO" id="GO:0005524">
    <property type="term" value="F:ATP binding"/>
    <property type="evidence" value="ECO:0007669"/>
    <property type="project" value="UniProtKB-UniRule"/>
</dbReference>
<dbReference type="GO" id="GO:0004721">
    <property type="term" value="F:phosphoprotein phosphatase activity"/>
    <property type="evidence" value="ECO:0007669"/>
    <property type="project" value="UniProtKB-KW"/>
</dbReference>
<dbReference type="GO" id="GO:0004674">
    <property type="term" value="F:protein serine/threonine kinase activity"/>
    <property type="evidence" value="ECO:0007669"/>
    <property type="project" value="UniProtKB-KW"/>
</dbReference>
<dbReference type="GO" id="GO:0006006">
    <property type="term" value="P:glucose metabolic process"/>
    <property type="evidence" value="ECO:0007669"/>
    <property type="project" value="InterPro"/>
</dbReference>
<dbReference type="GO" id="GO:0006097">
    <property type="term" value="P:glyoxylate cycle"/>
    <property type="evidence" value="ECO:0007669"/>
    <property type="project" value="UniProtKB-UniRule"/>
</dbReference>
<dbReference type="GO" id="GO:0006099">
    <property type="term" value="P:tricarboxylic acid cycle"/>
    <property type="evidence" value="ECO:0007669"/>
    <property type="project" value="UniProtKB-UniRule"/>
</dbReference>
<dbReference type="HAMAP" id="MF_00747">
    <property type="entry name" value="AceK"/>
    <property type="match status" value="1"/>
</dbReference>
<dbReference type="InterPro" id="IPR046855">
    <property type="entry name" value="AceK_kinase"/>
</dbReference>
<dbReference type="InterPro" id="IPR046854">
    <property type="entry name" value="AceK_regulatory"/>
</dbReference>
<dbReference type="InterPro" id="IPR010452">
    <property type="entry name" value="Isocitrate_DH_AceK"/>
</dbReference>
<dbReference type="NCBIfam" id="NF002804">
    <property type="entry name" value="PRK02946.1"/>
    <property type="match status" value="1"/>
</dbReference>
<dbReference type="PANTHER" id="PTHR39559">
    <property type="match status" value="1"/>
</dbReference>
<dbReference type="PANTHER" id="PTHR39559:SF1">
    <property type="entry name" value="ISOCITRATE DEHYDROGENASE KINASE_PHOSPHATASE"/>
    <property type="match status" value="1"/>
</dbReference>
<dbReference type="Pfam" id="PF06315">
    <property type="entry name" value="AceK_kinase"/>
    <property type="match status" value="1"/>
</dbReference>
<dbReference type="Pfam" id="PF20423">
    <property type="entry name" value="AceK_regulatory"/>
    <property type="match status" value="1"/>
</dbReference>
<dbReference type="PIRSF" id="PIRSF000719">
    <property type="entry name" value="AceK"/>
    <property type="match status" value="1"/>
</dbReference>
<protein>
    <recommendedName>
        <fullName evidence="1">Isocitrate dehydrogenase kinase/phosphatase</fullName>
        <shortName evidence="1">IDH kinase/phosphatase</shortName>
        <shortName evidence="1">IDHK/P</shortName>
        <ecNumber evidence="1">2.7.11.5</ecNumber>
        <ecNumber evidence="1">3.1.3.-</ecNumber>
    </recommendedName>
</protein>
<comment type="function">
    <text evidence="1">Bifunctional enzyme which can phosphorylate or dephosphorylate isocitrate dehydrogenase (IDH) on a specific serine residue. This is a regulatory mechanism which enables bacteria to bypass the Krebs cycle via the glyoxylate shunt in response to the source of carbon. When bacteria are grown on glucose, IDH is fully active and unphosphorylated, but when grown on acetate or ethanol, the activity of IDH declines drastically concomitant with its phosphorylation.</text>
</comment>
<comment type="catalytic activity">
    <reaction evidence="1">
        <text>L-seryl-[isocitrate dehydrogenase] + ATP = O-phospho-L-seryl-[isocitrate dehydrogenase] + ADP + H(+)</text>
        <dbReference type="Rhea" id="RHEA:43540"/>
        <dbReference type="Rhea" id="RHEA-COMP:10605"/>
        <dbReference type="Rhea" id="RHEA-COMP:10606"/>
        <dbReference type="ChEBI" id="CHEBI:15378"/>
        <dbReference type="ChEBI" id="CHEBI:29999"/>
        <dbReference type="ChEBI" id="CHEBI:30616"/>
        <dbReference type="ChEBI" id="CHEBI:83421"/>
        <dbReference type="ChEBI" id="CHEBI:456216"/>
        <dbReference type="EC" id="2.7.11.5"/>
    </reaction>
</comment>
<comment type="subcellular location">
    <subcellularLocation>
        <location evidence="1">Cytoplasm</location>
    </subcellularLocation>
</comment>
<comment type="similarity">
    <text evidence="1">Belongs to the AceK family.</text>
</comment>
<proteinExistence type="inferred from homology"/>
<keyword id="KW-0067">ATP-binding</keyword>
<keyword id="KW-0963">Cytoplasm</keyword>
<keyword id="KW-0329">Glyoxylate bypass</keyword>
<keyword id="KW-0378">Hydrolase</keyword>
<keyword id="KW-0418">Kinase</keyword>
<keyword id="KW-0547">Nucleotide-binding</keyword>
<keyword id="KW-0904">Protein phosphatase</keyword>
<keyword id="KW-1185">Reference proteome</keyword>
<keyword id="KW-0723">Serine/threonine-protein kinase</keyword>
<keyword id="KW-0808">Transferase</keyword>
<keyword id="KW-0816">Tricarboxylic acid cycle</keyword>
<gene>
    <name evidence="1" type="primary">aceK</name>
    <name type="ordered locus">CKO_03904</name>
</gene>